<protein>
    <recommendedName>
        <fullName>INO80 complex subunit B</fullName>
    </recommendedName>
    <alternativeName>
        <fullName>High mobility group AT-hook 1-like 4</fullName>
    </alternativeName>
    <alternativeName>
        <fullName>PAP-1-associated protein 1</fullName>
        <shortName>PAPA-1</shortName>
    </alternativeName>
    <alternativeName>
        <fullName>Zinc finger HIT domain-containing protein 4</fullName>
    </alternativeName>
</protein>
<dbReference type="EMBL" id="AK010946">
    <property type="protein sequence ID" value="BAB27284.1"/>
    <property type="molecule type" value="mRNA"/>
</dbReference>
<dbReference type="EMBL" id="AB054537">
    <property type="protein sequence ID" value="BAB21110.1"/>
    <property type="status" value="ALT_SEQ"/>
    <property type="molecule type" value="mRNA"/>
</dbReference>
<dbReference type="EMBL" id="BC019383">
    <property type="protein sequence ID" value="AAH19383.1"/>
    <property type="status" value="ALT_INIT"/>
    <property type="molecule type" value="mRNA"/>
</dbReference>
<dbReference type="EMBL" id="BC058788">
    <property type="protein sequence ID" value="AAH58788.1"/>
    <property type="status" value="ALT_INIT"/>
    <property type="molecule type" value="mRNA"/>
</dbReference>
<dbReference type="RefSeq" id="NP_076036.1">
    <property type="nucleotide sequence ID" value="NM_023547.1"/>
</dbReference>
<dbReference type="SMR" id="Q99PT3"/>
<dbReference type="ComplexPortal" id="CPX-878">
    <property type="entry name" value="INO80 chromatin remodeling complex"/>
</dbReference>
<dbReference type="FunCoup" id="Q99PT3">
    <property type="interactions" value="1513"/>
</dbReference>
<dbReference type="IntAct" id="Q99PT3">
    <property type="interactions" value="3"/>
</dbReference>
<dbReference type="MINT" id="Q99PT3"/>
<dbReference type="STRING" id="10090.ENSMUSP00000032109"/>
<dbReference type="GlyGen" id="Q99PT3">
    <property type="glycosylation" value="1 site"/>
</dbReference>
<dbReference type="iPTMnet" id="Q99PT3"/>
<dbReference type="PhosphoSitePlus" id="Q99PT3"/>
<dbReference type="jPOST" id="Q99PT3"/>
<dbReference type="PaxDb" id="10090-ENSMUSP00000109568"/>
<dbReference type="ProteomicsDB" id="267132"/>
<dbReference type="DNASU" id="70020"/>
<dbReference type="GeneID" id="70020"/>
<dbReference type="KEGG" id="mmu:70020"/>
<dbReference type="UCSC" id="uc009cmr.1">
    <property type="organism name" value="mouse"/>
</dbReference>
<dbReference type="AGR" id="MGI:1917270"/>
<dbReference type="CTD" id="83444"/>
<dbReference type="MGI" id="MGI:1917270">
    <property type="gene designation" value="Ino80b"/>
</dbReference>
<dbReference type="VEuPathDB" id="HostDB:ENSMUSG00000030034"/>
<dbReference type="eggNOG" id="ENOG502QUQX">
    <property type="taxonomic scope" value="Eukaryota"/>
</dbReference>
<dbReference type="InParanoid" id="Q99PT3"/>
<dbReference type="PhylomeDB" id="Q99PT3"/>
<dbReference type="TreeFam" id="TF105373"/>
<dbReference type="Reactome" id="R-MMU-5689603">
    <property type="pathway name" value="UCH proteinases"/>
</dbReference>
<dbReference type="Reactome" id="R-MMU-5696394">
    <property type="pathway name" value="DNA Damage Recognition in GG-NER"/>
</dbReference>
<dbReference type="BioGRID-ORCS" id="70020">
    <property type="hits" value="9 hits in 117 CRISPR screens"/>
</dbReference>
<dbReference type="PRO" id="PR:Q99PT3"/>
<dbReference type="Proteomes" id="UP000000589">
    <property type="component" value="Chromosome 6"/>
</dbReference>
<dbReference type="RNAct" id="Q99PT3">
    <property type="molecule type" value="protein"/>
</dbReference>
<dbReference type="GO" id="GO:0031011">
    <property type="term" value="C:Ino80 complex"/>
    <property type="evidence" value="ECO:0000266"/>
    <property type="project" value="ComplexPortal"/>
</dbReference>
<dbReference type="GO" id="GO:0005730">
    <property type="term" value="C:nucleolus"/>
    <property type="evidence" value="ECO:0007669"/>
    <property type="project" value="UniProtKB-SubCell"/>
</dbReference>
<dbReference type="GO" id="GO:0008270">
    <property type="term" value="F:zinc ion binding"/>
    <property type="evidence" value="ECO:0007669"/>
    <property type="project" value="UniProtKB-KW"/>
</dbReference>
<dbReference type="GO" id="GO:0006338">
    <property type="term" value="P:chromatin remodeling"/>
    <property type="evidence" value="ECO:0000266"/>
    <property type="project" value="ComplexPortal"/>
</dbReference>
<dbReference type="GO" id="GO:0006310">
    <property type="term" value="P:DNA recombination"/>
    <property type="evidence" value="ECO:0007669"/>
    <property type="project" value="UniProtKB-KW"/>
</dbReference>
<dbReference type="GO" id="GO:0006281">
    <property type="term" value="P:DNA repair"/>
    <property type="evidence" value="ECO:0007669"/>
    <property type="project" value="UniProtKB-KW"/>
</dbReference>
<dbReference type="GO" id="GO:0045739">
    <property type="term" value="P:positive regulation of DNA repair"/>
    <property type="evidence" value="ECO:0000314"/>
    <property type="project" value="ComplexPortal"/>
</dbReference>
<dbReference type="GO" id="GO:0045893">
    <property type="term" value="P:positive regulation of DNA-templated transcription"/>
    <property type="evidence" value="ECO:0000266"/>
    <property type="project" value="ComplexPortal"/>
</dbReference>
<dbReference type="GO" id="GO:1904507">
    <property type="term" value="P:positive regulation of telomere maintenance in response to DNA damage"/>
    <property type="evidence" value="ECO:0000315"/>
    <property type="project" value="ComplexPortal"/>
</dbReference>
<dbReference type="GO" id="GO:0051726">
    <property type="term" value="P:regulation of cell cycle"/>
    <property type="evidence" value="ECO:0000266"/>
    <property type="project" value="ComplexPortal"/>
</dbReference>
<dbReference type="GO" id="GO:0033044">
    <property type="term" value="P:regulation of chromosome organization"/>
    <property type="evidence" value="ECO:0000266"/>
    <property type="project" value="ComplexPortal"/>
</dbReference>
<dbReference type="GO" id="GO:0006282">
    <property type="term" value="P:regulation of DNA repair"/>
    <property type="evidence" value="ECO:0000314"/>
    <property type="project" value="ComplexPortal"/>
</dbReference>
<dbReference type="GO" id="GO:0006275">
    <property type="term" value="P:regulation of DNA replication"/>
    <property type="evidence" value="ECO:0000266"/>
    <property type="project" value="ComplexPortal"/>
</dbReference>
<dbReference type="GO" id="GO:0060382">
    <property type="term" value="P:regulation of DNA strand elongation"/>
    <property type="evidence" value="ECO:0000266"/>
    <property type="project" value="ComplexPortal"/>
</dbReference>
<dbReference type="GO" id="GO:0045995">
    <property type="term" value="P:regulation of embryonic development"/>
    <property type="evidence" value="ECO:0000315"/>
    <property type="project" value="ComplexPortal"/>
</dbReference>
<dbReference type="GO" id="GO:0000723">
    <property type="term" value="P:telomere maintenance"/>
    <property type="evidence" value="ECO:0000315"/>
    <property type="project" value="ComplexPortal"/>
</dbReference>
<dbReference type="CDD" id="cd23021">
    <property type="entry name" value="zf-HIT_IN80B"/>
    <property type="match status" value="1"/>
</dbReference>
<dbReference type="InterPro" id="IPR029523">
    <property type="entry name" value="INO80B/Ies2"/>
</dbReference>
<dbReference type="InterPro" id="IPR006880">
    <property type="entry name" value="INO80B_C"/>
</dbReference>
<dbReference type="InterPro" id="IPR007529">
    <property type="entry name" value="Znf_HIT"/>
</dbReference>
<dbReference type="PANTHER" id="PTHR21561">
    <property type="entry name" value="INO80 COMPLEX SUBUNIT B"/>
    <property type="match status" value="1"/>
</dbReference>
<dbReference type="PANTHER" id="PTHR21561:SF12">
    <property type="entry name" value="INO80 COMPLEX SUBUNIT B"/>
    <property type="match status" value="1"/>
</dbReference>
<dbReference type="Pfam" id="PF04795">
    <property type="entry name" value="PAPA-1"/>
    <property type="match status" value="1"/>
</dbReference>
<dbReference type="Pfam" id="PF04438">
    <property type="entry name" value="zf-HIT"/>
    <property type="match status" value="1"/>
</dbReference>
<dbReference type="SMART" id="SM01406">
    <property type="entry name" value="PAPA-1"/>
    <property type="match status" value="1"/>
</dbReference>
<feature type="chain" id="PRO_0000173555" description="INO80 complex subunit B">
    <location>
        <begin position="1"/>
        <end position="375"/>
    </location>
</feature>
<feature type="zinc finger region" description="HIT-type">
    <location>
        <begin position="324"/>
        <end position="355"/>
    </location>
</feature>
<feature type="region of interest" description="Disordered" evidence="4">
    <location>
        <begin position="1"/>
        <end position="84"/>
    </location>
</feature>
<feature type="region of interest" description="Disordered" evidence="4">
    <location>
        <begin position="143"/>
        <end position="165"/>
    </location>
</feature>
<feature type="region of interest" description="Disordered" evidence="4">
    <location>
        <begin position="201"/>
        <end position="220"/>
    </location>
</feature>
<feature type="region of interest" description="Disordered" evidence="4">
    <location>
        <begin position="262"/>
        <end position="287"/>
    </location>
</feature>
<feature type="region of interest" description="Disordered" evidence="4">
    <location>
        <begin position="312"/>
        <end position="331"/>
    </location>
</feature>
<feature type="coiled-coil region" evidence="3">
    <location>
        <begin position="230"/>
        <end position="262"/>
    </location>
</feature>
<feature type="compositionally biased region" description="Basic residues" evidence="4">
    <location>
        <begin position="50"/>
        <end position="68"/>
    </location>
</feature>
<feature type="modified residue" description="Phosphoserine" evidence="7">
    <location>
        <position position="114"/>
    </location>
</feature>
<feature type="modified residue" description="Phosphoserine" evidence="7">
    <location>
        <position position="116"/>
    </location>
</feature>
<feature type="modified residue" description="Phosphoserine" evidence="7">
    <location>
        <position position="144"/>
    </location>
</feature>
<feature type="modified residue" description="Phosphoserine" evidence="7">
    <location>
        <position position="147"/>
    </location>
</feature>
<feature type="modified residue" description="Phosphoserine" evidence="7">
    <location>
        <position position="149"/>
    </location>
</feature>
<gene>
    <name type="primary">Ino80b</name>
    <name type="synonym">Hmga1l4</name>
    <name type="synonym">Papa1</name>
    <name type="synonym">Znhit4</name>
</gene>
<proteinExistence type="evidence at protein level"/>
<evidence type="ECO:0000250" key="1"/>
<evidence type="ECO:0000250" key="2">
    <source>
        <dbReference type="UniProtKB" id="Q9C086"/>
    </source>
</evidence>
<evidence type="ECO:0000255" key="3"/>
<evidence type="ECO:0000256" key="4">
    <source>
        <dbReference type="SAM" id="MobiDB-lite"/>
    </source>
</evidence>
<evidence type="ECO:0000269" key="5">
    <source>
    </source>
</evidence>
<evidence type="ECO:0000305" key="6"/>
<evidence type="ECO:0007744" key="7">
    <source>
    </source>
</evidence>
<organism>
    <name type="scientific">Mus musculus</name>
    <name type="common">Mouse</name>
    <dbReference type="NCBI Taxonomy" id="10090"/>
    <lineage>
        <taxon>Eukaryota</taxon>
        <taxon>Metazoa</taxon>
        <taxon>Chordata</taxon>
        <taxon>Craniata</taxon>
        <taxon>Vertebrata</taxon>
        <taxon>Euteleostomi</taxon>
        <taxon>Mammalia</taxon>
        <taxon>Eutheria</taxon>
        <taxon>Euarchontoglires</taxon>
        <taxon>Glires</taxon>
        <taxon>Rodentia</taxon>
        <taxon>Myomorpha</taxon>
        <taxon>Muroidea</taxon>
        <taxon>Muridae</taxon>
        <taxon>Murinae</taxon>
        <taxon>Mus</taxon>
        <taxon>Mus</taxon>
    </lineage>
</organism>
<accession>Q99PT3</accession>
<accession>Q9CY38</accession>
<sequence>MSACVPTVSSPLPLQDPMSKLWRRGSTSGAMEAPEPGETLELSLAGAHGHGVHKKKHKKHKKKHKKKHHQEEEAGPTLQTPAKPQLKLKIKLGGQVLGTKSVPTFTVIPEGPRSPSPLMVVDNEEEPMEGVPLEQYRAWLDEDSNLSPSPLRDLPGDLEGQEEEEEQRWLDALEKGELDDNGDLKKEINERLLTARQRALLQKARSQPSPTLPLPVGGGCPAPALTEEMLLKREERARKRRLQAARRAEEHKNQTIERLTKTAAPSGRGGRGAARGERRGGRAAAPAPAPMVRYCSGAQGSTLSFPPGVPTPTAVAQRPAPSGPAPRCSVPGCPHPRRYACSRTGQALCSLQCYRINLQLRLGGPEGPGSPLLAT</sequence>
<comment type="function">
    <text evidence="1 5">Proposed core component of the chromatin remodeling INO80 complex which is involved in transcriptional regulation, DNA replication and probably DNA repair.</text>
</comment>
<comment type="subunit">
    <text evidence="1 5">Component of the chromatin remodeling INO80 complex; specifically part of a complex module associated with the helicase ATP-binding and the helicase C-terminal domain of INO80 (By similarity). Interacts with RP9.</text>
</comment>
<comment type="subcellular location">
    <subcellularLocation>
        <location evidence="2">Nucleus</location>
    </subcellularLocation>
    <subcellularLocation>
        <location evidence="5">Nucleus</location>
        <location evidence="5">Nucleolus</location>
    </subcellularLocation>
</comment>
<comment type="tissue specificity">
    <text evidence="5">Expressed strongly in the testis and moderately in the kidney, skeletal muscle, liver and lung.</text>
</comment>
<comment type="caution">
    <text evidence="6">It is uncertain whether Met-1 or Met-18 is the initiator.</text>
</comment>
<comment type="sequence caution" evidence="6">
    <conflict type="erroneous initiation">
        <sequence resource="EMBL-CDS" id="AAH19383"/>
    </conflict>
    <text>Truncated N-terminus.</text>
</comment>
<comment type="sequence caution" evidence="6">
    <conflict type="erroneous initiation">
        <sequence resource="EMBL-CDS" id="AAH58788"/>
    </conflict>
    <text>Truncated N-terminus.</text>
</comment>
<comment type="sequence caution" evidence="6">
    <conflict type="frameshift">
        <sequence resource="EMBL-CDS" id="BAB21110"/>
    </conflict>
</comment>
<keyword id="KW-0175">Coiled coil</keyword>
<keyword id="KW-0227">DNA damage</keyword>
<keyword id="KW-0233">DNA recombination</keyword>
<keyword id="KW-0234">DNA repair</keyword>
<keyword id="KW-0479">Metal-binding</keyword>
<keyword id="KW-0539">Nucleus</keyword>
<keyword id="KW-0597">Phosphoprotein</keyword>
<keyword id="KW-1185">Reference proteome</keyword>
<keyword id="KW-0804">Transcription</keyword>
<keyword id="KW-0805">Transcription regulation</keyword>
<keyword id="KW-0862">Zinc</keyword>
<keyword id="KW-0863">Zinc-finger</keyword>
<name>IN80B_MOUSE</name>
<reference key="1">
    <citation type="journal article" date="2005" name="Science">
        <title>The transcriptional landscape of the mammalian genome.</title>
        <authorList>
            <person name="Carninci P."/>
            <person name="Kasukawa T."/>
            <person name="Katayama S."/>
            <person name="Gough J."/>
            <person name="Frith M.C."/>
            <person name="Maeda N."/>
            <person name="Oyama R."/>
            <person name="Ravasi T."/>
            <person name="Lenhard B."/>
            <person name="Wells C."/>
            <person name="Kodzius R."/>
            <person name="Shimokawa K."/>
            <person name="Bajic V.B."/>
            <person name="Brenner S.E."/>
            <person name="Batalov S."/>
            <person name="Forrest A.R."/>
            <person name="Zavolan M."/>
            <person name="Davis M.J."/>
            <person name="Wilming L.G."/>
            <person name="Aidinis V."/>
            <person name="Allen J.E."/>
            <person name="Ambesi-Impiombato A."/>
            <person name="Apweiler R."/>
            <person name="Aturaliya R.N."/>
            <person name="Bailey T.L."/>
            <person name="Bansal M."/>
            <person name="Baxter L."/>
            <person name="Beisel K.W."/>
            <person name="Bersano T."/>
            <person name="Bono H."/>
            <person name="Chalk A.M."/>
            <person name="Chiu K.P."/>
            <person name="Choudhary V."/>
            <person name="Christoffels A."/>
            <person name="Clutterbuck D.R."/>
            <person name="Crowe M.L."/>
            <person name="Dalla E."/>
            <person name="Dalrymple B.P."/>
            <person name="de Bono B."/>
            <person name="Della Gatta G."/>
            <person name="di Bernardo D."/>
            <person name="Down T."/>
            <person name="Engstrom P."/>
            <person name="Fagiolini M."/>
            <person name="Faulkner G."/>
            <person name="Fletcher C.F."/>
            <person name="Fukushima T."/>
            <person name="Furuno M."/>
            <person name="Futaki S."/>
            <person name="Gariboldi M."/>
            <person name="Georgii-Hemming P."/>
            <person name="Gingeras T.R."/>
            <person name="Gojobori T."/>
            <person name="Green R.E."/>
            <person name="Gustincich S."/>
            <person name="Harbers M."/>
            <person name="Hayashi Y."/>
            <person name="Hensch T.K."/>
            <person name="Hirokawa N."/>
            <person name="Hill D."/>
            <person name="Huminiecki L."/>
            <person name="Iacono M."/>
            <person name="Ikeo K."/>
            <person name="Iwama A."/>
            <person name="Ishikawa T."/>
            <person name="Jakt M."/>
            <person name="Kanapin A."/>
            <person name="Katoh M."/>
            <person name="Kawasawa Y."/>
            <person name="Kelso J."/>
            <person name="Kitamura H."/>
            <person name="Kitano H."/>
            <person name="Kollias G."/>
            <person name="Krishnan S.P."/>
            <person name="Kruger A."/>
            <person name="Kummerfeld S.K."/>
            <person name="Kurochkin I.V."/>
            <person name="Lareau L.F."/>
            <person name="Lazarevic D."/>
            <person name="Lipovich L."/>
            <person name="Liu J."/>
            <person name="Liuni S."/>
            <person name="McWilliam S."/>
            <person name="Madan Babu M."/>
            <person name="Madera M."/>
            <person name="Marchionni L."/>
            <person name="Matsuda H."/>
            <person name="Matsuzawa S."/>
            <person name="Miki H."/>
            <person name="Mignone F."/>
            <person name="Miyake S."/>
            <person name="Morris K."/>
            <person name="Mottagui-Tabar S."/>
            <person name="Mulder N."/>
            <person name="Nakano N."/>
            <person name="Nakauchi H."/>
            <person name="Ng P."/>
            <person name="Nilsson R."/>
            <person name="Nishiguchi S."/>
            <person name="Nishikawa S."/>
            <person name="Nori F."/>
            <person name="Ohara O."/>
            <person name="Okazaki Y."/>
            <person name="Orlando V."/>
            <person name="Pang K.C."/>
            <person name="Pavan W.J."/>
            <person name="Pavesi G."/>
            <person name="Pesole G."/>
            <person name="Petrovsky N."/>
            <person name="Piazza S."/>
            <person name="Reed J."/>
            <person name="Reid J.F."/>
            <person name="Ring B.Z."/>
            <person name="Ringwald M."/>
            <person name="Rost B."/>
            <person name="Ruan Y."/>
            <person name="Salzberg S.L."/>
            <person name="Sandelin A."/>
            <person name="Schneider C."/>
            <person name="Schoenbach C."/>
            <person name="Sekiguchi K."/>
            <person name="Semple C.A."/>
            <person name="Seno S."/>
            <person name="Sessa L."/>
            <person name="Sheng Y."/>
            <person name="Shibata Y."/>
            <person name="Shimada H."/>
            <person name="Shimada K."/>
            <person name="Silva D."/>
            <person name="Sinclair B."/>
            <person name="Sperling S."/>
            <person name="Stupka E."/>
            <person name="Sugiura K."/>
            <person name="Sultana R."/>
            <person name="Takenaka Y."/>
            <person name="Taki K."/>
            <person name="Tammoja K."/>
            <person name="Tan S.L."/>
            <person name="Tang S."/>
            <person name="Taylor M.S."/>
            <person name="Tegner J."/>
            <person name="Teichmann S.A."/>
            <person name="Ueda H.R."/>
            <person name="van Nimwegen E."/>
            <person name="Verardo R."/>
            <person name="Wei C.L."/>
            <person name="Yagi K."/>
            <person name="Yamanishi H."/>
            <person name="Zabarovsky E."/>
            <person name="Zhu S."/>
            <person name="Zimmer A."/>
            <person name="Hide W."/>
            <person name="Bult C."/>
            <person name="Grimmond S.M."/>
            <person name="Teasdale R.D."/>
            <person name="Liu E.T."/>
            <person name="Brusic V."/>
            <person name="Quackenbush J."/>
            <person name="Wahlestedt C."/>
            <person name="Mattick J.S."/>
            <person name="Hume D.A."/>
            <person name="Kai C."/>
            <person name="Sasaki D."/>
            <person name="Tomaru Y."/>
            <person name="Fukuda S."/>
            <person name="Kanamori-Katayama M."/>
            <person name="Suzuki M."/>
            <person name="Aoki J."/>
            <person name="Arakawa T."/>
            <person name="Iida J."/>
            <person name="Imamura K."/>
            <person name="Itoh M."/>
            <person name="Kato T."/>
            <person name="Kawaji H."/>
            <person name="Kawagashira N."/>
            <person name="Kawashima T."/>
            <person name="Kojima M."/>
            <person name="Kondo S."/>
            <person name="Konno H."/>
            <person name="Nakano K."/>
            <person name="Ninomiya N."/>
            <person name="Nishio T."/>
            <person name="Okada M."/>
            <person name="Plessy C."/>
            <person name="Shibata K."/>
            <person name="Shiraki T."/>
            <person name="Suzuki S."/>
            <person name="Tagami M."/>
            <person name="Waki K."/>
            <person name="Watahiki A."/>
            <person name="Okamura-Oho Y."/>
            <person name="Suzuki H."/>
            <person name="Kawai J."/>
            <person name="Hayashizaki Y."/>
        </authorList>
    </citation>
    <scope>NUCLEOTIDE SEQUENCE [LARGE SCALE MRNA]</scope>
    <source>
        <strain>C57BL/6J</strain>
        <tissue>Liver</tissue>
    </source>
</reference>
<reference key="2">
    <citation type="journal article" date="2004" name="Gene">
        <title>A novel nucleolar protein, PAPA-1, induces growth arrest as a result of cell cycle arrest at the G1 phase.</title>
        <authorList>
            <person name="Kuroda T.S."/>
            <person name="Maita H."/>
            <person name="Tabata T."/>
            <person name="Taira T."/>
            <person name="Kitaura H."/>
            <person name="Ariga H."/>
            <person name="Iguchi-Ariga S.M.M."/>
        </authorList>
    </citation>
    <scope>NUCLEOTIDE SEQUENCE [MRNA] OF 3-375</scope>
    <scope>SUBCELLULAR LOCATION</scope>
    <scope>INTERACTION WITH RP9</scope>
    <scope>FUNCTION</scope>
    <scope>TISSUE SPECIFICITY</scope>
</reference>
<reference key="3">
    <citation type="journal article" date="2004" name="Genome Res.">
        <title>The status, quality, and expansion of the NIH full-length cDNA project: the Mammalian Gene Collection (MGC).</title>
        <authorList>
            <consortium name="The MGC Project Team"/>
        </authorList>
    </citation>
    <scope>NUCLEOTIDE SEQUENCE [LARGE SCALE MRNA] OF 16-375</scope>
    <source>
        <strain>FVB/N-3</strain>
        <tissue>Mammary tumor</tissue>
    </source>
</reference>
<reference key="4">
    <citation type="journal article" date="2010" name="Cell">
        <title>A tissue-specific atlas of mouse protein phosphorylation and expression.</title>
        <authorList>
            <person name="Huttlin E.L."/>
            <person name="Jedrychowski M.P."/>
            <person name="Elias J.E."/>
            <person name="Goswami T."/>
            <person name="Rad R."/>
            <person name="Beausoleil S.A."/>
            <person name="Villen J."/>
            <person name="Haas W."/>
            <person name="Sowa M.E."/>
            <person name="Gygi S.P."/>
        </authorList>
    </citation>
    <scope>PHOSPHORYLATION [LARGE SCALE ANALYSIS] AT SER-114; SER-116; SER-144; SER-147 AND SER-149</scope>
    <scope>IDENTIFICATION BY MASS SPECTROMETRY [LARGE SCALE ANALYSIS]</scope>
    <source>
        <tissue>Brain</tissue>
        <tissue>Kidney</tissue>
        <tissue>Lung</tissue>
        <tissue>Spleen</tissue>
        <tissue>Testis</tissue>
    </source>
</reference>